<reference key="1">
    <citation type="journal article" date="2010" name="Appl. Environ. Microbiol.">
        <title>The genome sequence of Psychrobacter arcticus 273-4, a psychroactive Siberian permafrost bacterium, reveals mechanisms for adaptation to low-temperature growth.</title>
        <authorList>
            <person name="Ayala-del-Rio H.L."/>
            <person name="Chain P.S."/>
            <person name="Grzymski J.J."/>
            <person name="Ponder M.A."/>
            <person name="Ivanova N."/>
            <person name="Bergholz P.W."/>
            <person name="Di Bartolo G."/>
            <person name="Hauser L."/>
            <person name="Land M."/>
            <person name="Bakermans C."/>
            <person name="Rodrigues D."/>
            <person name="Klappenbach J."/>
            <person name="Zarka D."/>
            <person name="Larimer F."/>
            <person name="Richardson P."/>
            <person name="Murray A."/>
            <person name="Thomashow M."/>
            <person name="Tiedje J.M."/>
        </authorList>
    </citation>
    <scope>NUCLEOTIDE SEQUENCE [LARGE SCALE GENOMIC DNA]</scope>
    <source>
        <strain>DSM 17307 / VKM B-2377 / 273-4</strain>
    </source>
</reference>
<comment type="catalytic activity">
    <reaction evidence="1">
        <text>(S)-malate + NAD(+) = pyruvate + CO2 + NADH</text>
        <dbReference type="Rhea" id="RHEA:12653"/>
        <dbReference type="ChEBI" id="CHEBI:15361"/>
        <dbReference type="ChEBI" id="CHEBI:15589"/>
        <dbReference type="ChEBI" id="CHEBI:16526"/>
        <dbReference type="ChEBI" id="CHEBI:57540"/>
        <dbReference type="ChEBI" id="CHEBI:57945"/>
        <dbReference type="EC" id="1.1.1.38"/>
    </reaction>
</comment>
<comment type="catalytic activity">
    <reaction evidence="1">
        <text>oxaloacetate + H(+) = pyruvate + CO2</text>
        <dbReference type="Rhea" id="RHEA:15641"/>
        <dbReference type="ChEBI" id="CHEBI:15361"/>
        <dbReference type="ChEBI" id="CHEBI:15378"/>
        <dbReference type="ChEBI" id="CHEBI:16452"/>
        <dbReference type="ChEBI" id="CHEBI:16526"/>
        <dbReference type="EC" id="1.1.1.38"/>
    </reaction>
</comment>
<comment type="cofactor">
    <cofactor evidence="1">
        <name>Mg(2+)</name>
        <dbReference type="ChEBI" id="CHEBI:18420"/>
    </cofactor>
    <cofactor evidence="1">
        <name>Mn(2+)</name>
        <dbReference type="ChEBI" id="CHEBI:29035"/>
    </cofactor>
    <text evidence="1">Divalent metal cations. Prefers magnesium or manganese.</text>
</comment>
<comment type="subunit">
    <text evidence="1">Homotetramer.</text>
</comment>
<comment type="similarity">
    <text evidence="1">Belongs to the malic enzymes family.</text>
</comment>
<dbReference type="EC" id="1.1.1.38" evidence="1"/>
<dbReference type="EMBL" id="CP000082">
    <property type="protein sequence ID" value="AAZ19235.1"/>
    <property type="molecule type" value="Genomic_DNA"/>
</dbReference>
<dbReference type="RefSeq" id="WP_011280656.1">
    <property type="nucleotide sequence ID" value="NC_007204.1"/>
</dbReference>
<dbReference type="SMR" id="Q4FRX3"/>
<dbReference type="STRING" id="259536.Psyc_1387"/>
<dbReference type="KEGG" id="par:Psyc_1387"/>
<dbReference type="eggNOG" id="COG0281">
    <property type="taxonomic scope" value="Bacteria"/>
</dbReference>
<dbReference type="HOGENOM" id="CLU_011405_5_2_6"/>
<dbReference type="OrthoDB" id="3314528at2"/>
<dbReference type="Proteomes" id="UP000000546">
    <property type="component" value="Chromosome"/>
</dbReference>
<dbReference type="GO" id="GO:0005829">
    <property type="term" value="C:cytosol"/>
    <property type="evidence" value="ECO:0007669"/>
    <property type="project" value="TreeGrafter"/>
</dbReference>
<dbReference type="GO" id="GO:0004471">
    <property type="term" value="F:malate dehydrogenase (decarboxylating) (NAD+) activity"/>
    <property type="evidence" value="ECO:0007669"/>
    <property type="project" value="UniProtKB-UniRule"/>
</dbReference>
<dbReference type="GO" id="GO:0046872">
    <property type="term" value="F:metal ion binding"/>
    <property type="evidence" value="ECO:0007669"/>
    <property type="project" value="UniProtKB-KW"/>
</dbReference>
<dbReference type="GO" id="GO:0051287">
    <property type="term" value="F:NAD binding"/>
    <property type="evidence" value="ECO:0007669"/>
    <property type="project" value="InterPro"/>
</dbReference>
<dbReference type="GO" id="GO:0008948">
    <property type="term" value="F:oxaloacetate decarboxylase activity"/>
    <property type="evidence" value="ECO:0007669"/>
    <property type="project" value="UniProtKB-UniRule"/>
</dbReference>
<dbReference type="GO" id="GO:0006108">
    <property type="term" value="P:malate metabolic process"/>
    <property type="evidence" value="ECO:0007669"/>
    <property type="project" value="TreeGrafter"/>
</dbReference>
<dbReference type="CDD" id="cd05312">
    <property type="entry name" value="NAD_bind_1_malic_enz"/>
    <property type="match status" value="1"/>
</dbReference>
<dbReference type="FunFam" id="3.40.50.10380:FF:000001">
    <property type="entry name" value="NAD-dependent malic enzyme"/>
    <property type="match status" value="1"/>
</dbReference>
<dbReference type="Gene3D" id="3.40.50.10380">
    <property type="entry name" value="Malic enzyme, N-terminal domain"/>
    <property type="match status" value="1"/>
</dbReference>
<dbReference type="Gene3D" id="3.40.50.720">
    <property type="entry name" value="NAD(P)-binding Rossmann-like Domain"/>
    <property type="match status" value="1"/>
</dbReference>
<dbReference type="HAMAP" id="MF_01619">
    <property type="entry name" value="NAD_malic_enz"/>
    <property type="match status" value="1"/>
</dbReference>
<dbReference type="InterPro" id="IPR046346">
    <property type="entry name" value="Aminoacid_DH-like_N_sf"/>
</dbReference>
<dbReference type="InterPro" id="IPR015884">
    <property type="entry name" value="Malic_enzyme_CS"/>
</dbReference>
<dbReference type="InterPro" id="IPR012301">
    <property type="entry name" value="Malic_N_dom"/>
</dbReference>
<dbReference type="InterPro" id="IPR037062">
    <property type="entry name" value="Malic_N_dom_sf"/>
</dbReference>
<dbReference type="InterPro" id="IPR012302">
    <property type="entry name" value="Malic_NAD-bd"/>
</dbReference>
<dbReference type="InterPro" id="IPR001891">
    <property type="entry name" value="Malic_OxRdtase"/>
</dbReference>
<dbReference type="InterPro" id="IPR036291">
    <property type="entry name" value="NAD(P)-bd_dom_sf"/>
</dbReference>
<dbReference type="InterPro" id="IPR023667">
    <property type="entry name" value="NAD_malic_enz_proteobac"/>
</dbReference>
<dbReference type="NCBIfam" id="NF010052">
    <property type="entry name" value="PRK13529.1"/>
    <property type="match status" value="1"/>
</dbReference>
<dbReference type="PANTHER" id="PTHR23406">
    <property type="entry name" value="MALIC ENZYME-RELATED"/>
    <property type="match status" value="1"/>
</dbReference>
<dbReference type="PANTHER" id="PTHR23406:SF34">
    <property type="entry name" value="NAD-DEPENDENT MALIC ENZYME, MITOCHONDRIAL"/>
    <property type="match status" value="1"/>
</dbReference>
<dbReference type="Pfam" id="PF00390">
    <property type="entry name" value="malic"/>
    <property type="match status" value="1"/>
</dbReference>
<dbReference type="Pfam" id="PF03949">
    <property type="entry name" value="Malic_M"/>
    <property type="match status" value="1"/>
</dbReference>
<dbReference type="PIRSF" id="PIRSF000106">
    <property type="entry name" value="ME"/>
    <property type="match status" value="1"/>
</dbReference>
<dbReference type="PRINTS" id="PR00072">
    <property type="entry name" value="MALOXRDTASE"/>
</dbReference>
<dbReference type="SMART" id="SM01274">
    <property type="entry name" value="malic"/>
    <property type="match status" value="1"/>
</dbReference>
<dbReference type="SMART" id="SM00919">
    <property type="entry name" value="Malic_M"/>
    <property type="match status" value="1"/>
</dbReference>
<dbReference type="SUPFAM" id="SSF53223">
    <property type="entry name" value="Aminoacid dehydrogenase-like, N-terminal domain"/>
    <property type="match status" value="1"/>
</dbReference>
<dbReference type="SUPFAM" id="SSF51735">
    <property type="entry name" value="NAD(P)-binding Rossmann-fold domains"/>
    <property type="match status" value="1"/>
</dbReference>
<dbReference type="PROSITE" id="PS00331">
    <property type="entry name" value="MALIC_ENZYMES"/>
    <property type="match status" value="1"/>
</dbReference>
<feature type="chain" id="PRO_0000160227" description="NAD-dependent malic enzyme">
    <location>
        <begin position="1"/>
        <end position="560"/>
    </location>
</feature>
<feature type="active site" description="Proton donor" evidence="1">
    <location>
        <position position="100"/>
    </location>
</feature>
<feature type="active site" description="Proton acceptor" evidence="1">
    <location>
        <position position="171"/>
    </location>
</feature>
<feature type="binding site" evidence="1">
    <location>
        <position position="153"/>
    </location>
    <ligand>
        <name>NAD(+)</name>
        <dbReference type="ChEBI" id="CHEBI:57540"/>
    </ligand>
</feature>
<feature type="binding site" evidence="1">
    <location>
        <position position="242"/>
    </location>
    <ligand>
        <name>a divalent metal cation</name>
        <dbReference type="ChEBI" id="CHEBI:60240"/>
    </ligand>
</feature>
<feature type="binding site" evidence="1">
    <location>
        <position position="243"/>
    </location>
    <ligand>
        <name>a divalent metal cation</name>
        <dbReference type="ChEBI" id="CHEBI:60240"/>
    </ligand>
</feature>
<feature type="binding site" evidence="1">
    <location>
        <position position="266"/>
    </location>
    <ligand>
        <name>a divalent metal cation</name>
        <dbReference type="ChEBI" id="CHEBI:60240"/>
    </ligand>
</feature>
<feature type="binding site" evidence="1">
    <location>
        <position position="266"/>
    </location>
    <ligand>
        <name>NAD(+)</name>
        <dbReference type="ChEBI" id="CHEBI:57540"/>
    </ligand>
</feature>
<feature type="binding site" evidence="1">
    <location>
        <position position="413"/>
    </location>
    <ligand>
        <name>NAD(+)</name>
        <dbReference type="ChEBI" id="CHEBI:57540"/>
    </ligand>
</feature>
<feature type="site" description="Important for activity" evidence="1">
    <location>
        <position position="266"/>
    </location>
</feature>
<gene>
    <name evidence="1" type="primary">maeA</name>
    <name type="ordered locus">Psyc_1387</name>
</gene>
<organism>
    <name type="scientific">Psychrobacter arcticus (strain DSM 17307 / VKM B-2377 / 273-4)</name>
    <dbReference type="NCBI Taxonomy" id="259536"/>
    <lineage>
        <taxon>Bacteria</taxon>
        <taxon>Pseudomonadati</taxon>
        <taxon>Pseudomonadota</taxon>
        <taxon>Gammaproteobacteria</taxon>
        <taxon>Moraxellales</taxon>
        <taxon>Moraxellaceae</taxon>
        <taxon>Psychrobacter</taxon>
    </lineage>
</organism>
<sequence>MPNQRPLYIPFSGPALLETPLLNKGSAFSSEERDSFNLTGLLPHNIETIEEQSLRAYHQLRSFTTDIDKHIYLRNIQDTNETLFHHLIEQHIEEVMPLIYTPTVGQACEKFSQIYRRKRGLFISYPDRHKIDDMLQNATKQKVKVIVVTDGERILGLGDQGIGGMGIPIGKLALYTACGGISPAYCLPILLDVGTNNQQLLDDPMYMGWRNQRISGDEYNEFVDLFIQAVKRRWPEVLLQFEDFAQENATPLLNRYRDQLCCFNDDIQGTAAVSVGTLIAACLNKGQKLSQQKIAFLGAGSAGCGIAEHIIRQMQREGLTEEQARKQVFMVDRYGLLTDSMTELQKFQAPLVQKESAIESWDKSQKLGLAQVVKQAKITVLFGVSGQKGLFTREVIEALCVNTEHPIVLPLSNPTSRVEATPQEVTSWSRGKAIVATGSPFPNTTFEDQSFEISQCNNSYIFPGIGLGVLAAHATGISDNMLMSASQALADISMEYEKAPGAILPPIKFIREISEKIAYAVALQAIEDKLALPVTAENLERRLKANFWLPRYHNYRRTSF</sequence>
<keyword id="KW-0479">Metal-binding</keyword>
<keyword id="KW-0520">NAD</keyword>
<keyword id="KW-0560">Oxidoreductase</keyword>
<keyword id="KW-1185">Reference proteome</keyword>
<name>MAO1_PSYA2</name>
<protein>
    <recommendedName>
        <fullName evidence="1">NAD-dependent malic enzyme</fullName>
        <shortName evidence="1">NAD-ME</shortName>
        <ecNumber evidence="1">1.1.1.38</ecNumber>
    </recommendedName>
</protein>
<evidence type="ECO:0000255" key="1">
    <source>
        <dbReference type="HAMAP-Rule" id="MF_01619"/>
    </source>
</evidence>
<proteinExistence type="inferred from homology"/>
<accession>Q4FRX3</accession>